<feature type="signal peptide" evidence="2">
    <location>
        <begin position="1"/>
        <end position="14"/>
    </location>
</feature>
<feature type="propeptide" id="PRO_0000035172" evidence="1">
    <location>
        <begin position="15"/>
        <end position="27"/>
    </location>
</feature>
<feature type="chain" id="PRO_0000035173" description="Toxin tox21A">
    <location>
        <begin position="28"/>
        <end position="289"/>
    </location>
</feature>
<feature type="region of interest" description="Disordered" evidence="3">
    <location>
        <begin position="270"/>
        <end position="289"/>
    </location>
</feature>
<proteinExistence type="evidence at transcript level"/>
<dbReference type="EMBL" id="S58065">
    <property type="protein sequence ID" value="AAB26160.1"/>
    <property type="molecule type" value="mRNA"/>
</dbReference>
<dbReference type="EMBL" id="L09272">
    <property type="protein sequence ID" value="AAA29801.1"/>
    <property type="molecule type" value="mRNA"/>
</dbReference>
<dbReference type="PIR" id="A45369">
    <property type="entry name" value="A45369"/>
</dbReference>
<dbReference type="GO" id="GO:0005576">
    <property type="term" value="C:extracellular region"/>
    <property type="evidence" value="ECO:0007669"/>
    <property type="project" value="UniProtKB-SubCell"/>
</dbReference>
<dbReference type="GO" id="GO:0090729">
    <property type="term" value="F:toxin activity"/>
    <property type="evidence" value="ECO:0007669"/>
    <property type="project" value="UniProtKB-KW"/>
</dbReference>
<dbReference type="InterPro" id="IPR016329">
    <property type="entry name" value="Neurotoxin_TxP-I"/>
</dbReference>
<dbReference type="PIRSF" id="PIRSF001883">
    <property type="entry name" value="Neurotoxin_TxP-I"/>
    <property type="match status" value="1"/>
</dbReference>
<name>TXPH_PYETR</name>
<sequence>MNLYFLFFISTILAAKPFNSFNKTSLIDEGVDNDDDIVSKRAVVIDYCDTRHPNNLCKKYFEIDSYWNDDTDCFTNIGCKVYGGFDIIGGKAPKIGTVCRLKKGKNKFGYCNSKGNCVERDFIESFGVSIKIKGISHRGDDEPACPLYENTWINYGKCNEPYHCGTNYGLFYANKRKLNYFPDNGQKCNSKYEIYGVCYLGRCHGTGNFSNGEVFSEFGTIFKDVEIVTLSDGKNSSKRGKHKNLHGSKVFDSNGIYDIDPKNWKIEDDDKDITVHENAGDPKSDSRRC</sequence>
<accession>Q07338</accession>
<organism>
    <name type="scientific">Pyemotes tritici</name>
    <name type="common">Straw itch mite</name>
    <name type="synonym">Acarus tritici</name>
    <dbReference type="NCBI Taxonomy" id="6950"/>
    <lineage>
        <taxon>Eukaryota</taxon>
        <taxon>Metazoa</taxon>
        <taxon>Ecdysozoa</taxon>
        <taxon>Arthropoda</taxon>
        <taxon>Chelicerata</taxon>
        <taxon>Arachnida</taxon>
        <taxon>Acari</taxon>
        <taxon>Acariformes</taxon>
        <taxon>Trombidiformes</taxon>
        <taxon>Prostigmata</taxon>
        <taxon>Eleutherengona</taxon>
        <taxon>Heterostigmata</taxon>
        <taxon>Pyemotoidea</taxon>
        <taxon>Pyemotidae</taxon>
        <taxon>Pyemotes</taxon>
    </lineage>
</organism>
<evidence type="ECO:0000250" key="1"/>
<evidence type="ECO:0000255" key="2"/>
<evidence type="ECO:0000256" key="3">
    <source>
        <dbReference type="SAM" id="MobiDB-lite"/>
    </source>
</evidence>
<protein>
    <recommendedName>
        <fullName>Toxin tox21A</fullName>
    </recommendedName>
    <alternativeName>
        <fullName>Insect-selective neurotoxin TxP-I homolog</fullName>
    </alternativeName>
</protein>
<reference key="1">
    <citation type="journal article" date="1993" name="Toxicon">
        <title>Identification and characterization of tox21A: a mite cDNA encoding a paralytic neurotoxin related to TxP-I.</title>
        <authorList>
            <person name="Tomalski M.D."/>
            <person name="Hutchinson K."/>
            <person name="Todd J."/>
            <person name="Miller L.K."/>
        </authorList>
    </citation>
    <scope>NUCLEOTIDE SEQUENCE [MRNA]</scope>
</reference>
<keyword id="KW-1015">Disulfide bond</keyword>
<keyword id="KW-0528">Neurotoxin</keyword>
<keyword id="KW-0964">Secreted</keyword>
<keyword id="KW-0732">Signal</keyword>
<keyword id="KW-0800">Toxin</keyword>
<comment type="function">
    <text>Has contracting-paralyzing activity in insect larvae.</text>
</comment>
<comment type="subcellular location">
    <subcellularLocation>
        <location evidence="1">Secreted</location>
    </subcellularLocation>
</comment>
<comment type="tissue specificity">
    <text>Posterior glands which appear to be connected with the stylet through a series of ducts.</text>
</comment>
<comment type="PTM">
    <text>Contains several disulfide bonds.</text>
</comment>